<protein>
    <recommendedName>
        <fullName evidence="1">Ribosome maturation factor RimP</fullName>
    </recommendedName>
</protein>
<feature type="chain" id="PRO_1000064760" description="Ribosome maturation factor RimP">
    <location>
        <begin position="1"/>
        <end position="125"/>
    </location>
</feature>
<sequence length="125" mass="14073">MQTIEQQITNVIEESLIDMGFELVLVKFKGVNSKVVEILIDSLNSEKVSVEDCTKVSRTIPAILDVENLIEDASSLEVASSGLERPLVKFENYNRFLGREVKITLKELLNDKTSYQGKIIKAENK</sequence>
<keyword id="KW-0963">Cytoplasm</keyword>
<keyword id="KW-0690">Ribosome biogenesis</keyword>
<name>RIMP_RICCK</name>
<accession>A8EYF2</accession>
<organism>
    <name type="scientific">Rickettsia canadensis (strain McKiel)</name>
    <dbReference type="NCBI Taxonomy" id="293613"/>
    <lineage>
        <taxon>Bacteria</taxon>
        <taxon>Pseudomonadati</taxon>
        <taxon>Pseudomonadota</taxon>
        <taxon>Alphaproteobacteria</taxon>
        <taxon>Rickettsiales</taxon>
        <taxon>Rickettsiaceae</taxon>
        <taxon>Rickettsieae</taxon>
        <taxon>Rickettsia</taxon>
        <taxon>belli group</taxon>
    </lineage>
</organism>
<proteinExistence type="inferred from homology"/>
<comment type="function">
    <text evidence="1">Required for maturation of 30S ribosomal subunits.</text>
</comment>
<comment type="subcellular location">
    <subcellularLocation>
        <location evidence="1">Cytoplasm</location>
    </subcellularLocation>
</comment>
<comment type="similarity">
    <text evidence="1">Belongs to the RimP family.</text>
</comment>
<reference key="1">
    <citation type="submission" date="2007-09" db="EMBL/GenBank/DDBJ databases">
        <title>Complete genome sequence of Rickettsia canadensis.</title>
        <authorList>
            <person name="Madan A."/>
            <person name="Fahey J."/>
            <person name="Helton E."/>
            <person name="Ketteman M."/>
            <person name="Madan A."/>
            <person name="Rodrigues S."/>
            <person name="Sanchez A."/>
            <person name="Whiting M."/>
            <person name="Dasch G."/>
            <person name="Eremeeva M."/>
        </authorList>
    </citation>
    <scope>NUCLEOTIDE SEQUENCE [LARGE SCALE GENOMIC DNA]</scope>
    <source>
        <strain>McKiel</strain>
    </source>
</reference>
<evidence type="ECO:0000255" key="1">
    <source>
        <dbReference type="HAMAP-Rule" id="MF_01077"/>
    </source>
</evidence>
<gene>
    <name evidence="1" type="primary">rimP</name>
    <name type="ordered locus">A1E_02200</name>
</gene>
<dbReference type="EMBL" id="CP000409">
    <property type="protein sequence ID" value="ABV73385.1"/>
    <property type="molecule type" value="Genomic_DNA"/>
</dbReference>
<dbReference type="SMR" id="A8EYF2"/>
<dbReference type="STRING" id="293613.A1E_02200"/>
<dbReference type="KEGG" id="rcm:A1E_02200"/>
<dbReference type="eggNOG" id="COG0779">
    <property type="taxonomic scope" value="Bacteria"/>
</dbReference>
<dbReference type="HOGENOM" id="CLU_070525_0_2_5"/>
<dbReference type="Proteomes" id="UP000007056">
    <property type="component" value="Chromosome"/>
</dbReference>
<dbReference type="GO" id="GO:0005829">
    <property type="term" value="C:cytosol"/>
    <property type="evidence" value="ECO:0007669"/>
    <property type="project" value="TreeGrafter"/>
</dbReference>
<dbReference type="GO" id="GO:0000028">
    <property type="term" value="P:ribosomal small subunit assembly"/>
    <property type="evidence" value="ECO:0007669"/>
    <property type="project" value="TreeGrafter"/>
</dbReference>
<dbReference type="GO" id="GO:0006412">
    <property type="term" value="P:translation"/>
    <property type="evidence" value="ECO:0007669"/>
    <property type="project" value="TreeGrafter"/>
</dbReference>
<dbReference type="CDD" id="cd01734">
    <property type="entry name" value="YlxS_C"/>
    <property type="match status" value="1"/>
</dbReference>
<dbReference type="Gene3D" id="3.30.300.70">
    <property type="entry name" value="RimP-like superfamily, N-terminal"/>
    <property type="match status" value="1"/>
</dbReference>
<dbReference type="HAMAP" id="MF_01077">
    <property type="entry name" value="RimP"/>
    <property type="match status" value="1"/>
</dbReference>
<dbReference type="InterPro" id="IPR003728">
    <property type="entry name" value="Ribosome_maturation_RimP"/>
</dbReference>
<dbReference type="InterPro" id="IPR028998">
    <property type="entry name" value="RimP_C"/>
</dbReference>
<dbReference type="InterPro" id="IPR036847">
    <property type="entry name" value="RimP_C_sf"/>
</dbReference>
<dbReference type="InterPro" id="IPR028989">
    <property type="entry name" value="RimP_N"/>
</dbReference>
<dbReference type="InterPro" id="IPR035956">
    <property type="entry name" value="RimP_N_sf"/>
</dbReference>
<dbReference type="PANTHER" id="PTHR33867">
    <property type="entry name" value="RIBOSOME MATURATION FACTOR RIMP"/>
    <property type="match status" value="1"/>
</dbReference>
<dbReference type="PANTHER" id="PTHR33867:SF1">
    <property type="entry name" value="RIBOSOME MATURATION FACTOR RIMP"/>
    <property type="match status" value="1"/>
</dbReference>
<dbReference type="Pfam" id="PF17384">
    <property type="entry name" value="DUF150_C"/>
    <property type="match status" value="1"/>
</dbReference>
<dbReference type="Pfam" id="PF02576">
    <property type="entry name" value="RimP_N"/>
    <property type="match status" value="1"/>
</dbReference>
<dbReference type="SUPFAM" id="SSF74942">
    <property type="entry name" value="YhbC-like, C-terminal domain"/>
    <property type="match status" value="1"/>
</dbReference>
<dbReference type="SUPFAM" id="SSF75420">
    <property type="entry name" value="YhbC-like, N-terminal domain"/>
    <property type="match status" value="1"/>
</dbReference>